<feature type="chain" id="PRO_1000000811" description="Adenylosuccinate synthetase">
    <location>
        <begin position="1"/>
        <end position="427"/>
    </location>
</feature>
<feature type="active site" description="Proton acceptor" evidence="1">
    <location>
        <position position="13"/>
    </location>
</feature>
<feature type="active site" description="Proton donor" evidence="1">
    <location>
        <position position="41"/>
    </location>
</feature>
<feature type="binding site" evidence="1">
    <location>
        <begin position="12"/>
        <end position="18"/>
    </location>
    <ligand>
        <name>GTP</name>
        <dbReference type="ChEBI" id="CHEBI:37565"/>
    </ligand>
</feature>
<feature type="binding site" description="in other chain" evidence="1">
    <location>
        <begin position="13"/>
        <end position="16"/>
    </location>
    <ligand>
        <name>IMP</name>
        <dbReference type="ChEBI" id="CHEBI:58053"/>
        <note>ligand shared between dimeric partners</note>
    </ligand>
</feature>
<feature type="binding site" evidence="1">
    <location>
        <position position="13"/>
    </location>
    <ligand>
        <name>Mg(2+)</name>
        <dbReference type="ChEBI" id="CHEBI:18420"/>
    </ligand>
</feature>
<feature type="binding site" description="in other chain" evidence="1">
    <location>
        <begin position="38"/>
        <end position="41"/>
    </location>
    <ligand>
        <name>IMP</name>
        <dbReference type="ChEBI" id="CHEBI:58053"/>
        <note>ligand shared between dimeric partners</note>
    </ligand>
</feature>
<feature type="binding site" evidence="1">
    <location>
        <begin position="40"/>
        <end position="42"/>
    </location>
    <ligand>
        <name>GTP</name>
        <dbReference type="ChEBI" id="CHEBI:37565"/>
    </ligand>
</feature>
<feature type="binding site" evidence="1">
    <location>
        <position position="40"/>
    </location>
    <ligand>
        <name>Mg(2+)</name>
        <dbReference type="ChEBI" id="CHEBI:18420"/>
    </ligand>
</feature>
<feature type="binding site" description="in other chain" evidence="1">
    <location>
        <position position="128"/>
    </location>
    <ligand>
        <name>IMP</name>
        <dbReference type="ChEBI" id="CHEBI:58053"/>
        <note>ligand shared between dimeric partners</note>
    </ligand>
</feature>
<feature type="binding site" evidence="1">
    <location>
        <position position="142"/>
    </location>
    <ligand>
        <name>IMP</name>
        <dbReference type="ChEBI" id="CHEBI:58053"/>
        <note>ligand shared between dimeric partners</note>
    </ligand>
</feature>
<feature type="binding site" description="in other chain" evidence="1">
    <location>
        <position position="223"/>
    </location>
    <ligand>
        <name>IMP</name>
        <dbReference type="ChEBI" id="CHEBI:58053"/>
        <note>ligand shared between dimeric partners</note>
    </ligand>
</feature>
<feature type="binding site" description="in other chain" evidence="1">
    <location>
        <position position="238"/>
    </location>
    <ligand>
        <name>IMP</name>
        <dbReference type="ChEBI" id="CHEBI:58053"/>
        <note>ligand shared between dimeric partners</note>
    </ligand>
</feature>
<feature type="binding site" evidence="1">
    <location>
        <begin position="298"/>
        <end position="304"/>
    </location>
    <ligand>
        <name>substrate</name>
    </ligand>
</feature>
<feature type="binding site" description="in other chain" evidence="1">
    <location>
        <position position="302"/>
    </location>
    <ligand>
        <name>IMP</name>
        <dbReference type="ChEBI" id="CHEBI:58053"/>
        <note>ligand shared between dimeric partners</note>
    </ligand>
</feature>
<feature type="binding site" evidence="1">
    <location>
        <position position="304"/>
    </location>
    <ligand>
        <name>GTP</name>
        <dbReference type="ChEBI" id="CHEBI:37565"/>
    </ligand>
</feature>
<feature type="binding site" evidence="1">
    <location>
        <begin position="330"/>
        <end position="332"/>
    </location>
    <ligand>
        <name>GTP</name>
        <dbReference type="ChEBI" id="CHEBI:37565"/>
    </ligand>
</feature>
<feature type="binding site" evidence="1">
    <location>
        <begin position="412"/>
        <end position="414"/>
    </location>
    <ligand>
        <name>GTP</name>
        <dbReference type="ChEBI" id="CHEBI:37565"/>
    </ligand>
</feature>
<name>PURA_DESHY</name>
<keyword id="KW-0963">Cytoplasm</keyword>
<keyword id="KW-0342">GTP-binding</keyword>
<keyword id="KW-0436">Ligase</keyword>
<keyword id="KW-0460">Magnesium</keyword>
<keyword id="KW-0479">Metal-binding</keyword>
<keyword id="KW-0547">Nucleotide-binding</keyword>
<keyword id="KW-0658">Purine biosynthesis</keyword>
<keyword id="KW-1185">Reference proteome</keyword>
<comment type="function">
    <text evidence="1">Plays an important role in the de novo pathway of purine nucleotide biosynthesis. Catalyzes the first committed step in the biosynthesis of AMP from IMP.</text>
</comment>
<comment type="catalytic activity">
    <reaction evidence="1">
        <text>IMP + L-aspartate + GTP = N(6)-(1,2-dicarboxyethyl)-AMP + GDP + phosphate + 2 H(+)</text>
        <dbReference type="Rhea" id="RHEA:15753"/>
        <dbReference type="ChEBI" id="CHEBI:15378"/>
        <dbReference type="ChEBI" id="CHEBI:29991"/>
        <dbReference type="ChEBI" id="CHEBI:37565"/>
        <dbReference type="ChEBI" id="CHEBI:43474"/>
        <dbReference type="ChEBI" id="CHEBI:57567"/>
        <dbReference type="ChEBI" id="CHEBI:58053"/>
        <dbReference type="ChEBI" id="CHEBI:58189"/>
        <dbReference type="EC" id="6.3.4.4"/>
    </reaction>
</comment>
<comment type="cofactor">
    <cofactor evidence="1">
        <name>Mg(2+)</name>
        <dbReference type="ChEBI" id="CHEBI:18420"/>
    </cofactor>
    <text evidence="1">Binds 1 Mg(2+) ion per subunit.</text>
</comment>
<comment type="pathway">
    <text evidence="1">Purine metabolism; AMP biosynthesis via de novo pathway; AMP from IMP: step 1/2.</text>
</comment>
<comment type="subunit">
    <text evidence="1">Homodimer.</text>
</comment>
<comment type="subcellular location">
    <subcellularLocation>
        <location evidence="1">Cytoplasm</location>
    </subcellularLocation>
</comment>
<comment type="similarity">
    <text evidence="1">Belongs to the adenylosuccinate synthetase family.</text>
</comment>
<reference key="1">
    <citation type="journal article" date="2006" name="J. Bacteriol.">
        <title>Complete genome sequence of the dehalorespiring bacterium Desulfitobacterium hafniense Y51 and comparison with Dehalococcoides ethenogenes 195.</title>
        <authorList>
            <person name="Nonaka H."/>
            <person name="Keresztes G."/>
            <person name="Shinoda Y."/>
            <person name="Ikenaga Y."/>
            <person name="Abe M."/>
            <person name="Naito K."/>
            <person name="Inatomi K."/>
            <person name="Furukawa K."/>
            <person name="Inui M."/>
            <person name="Yukawa H."/>
        </authorList>
    </citation>
    <scope>NUCLEOTIDE SEQUENCE [LARGE SCALE GENOMIC DNA]</scope>
    <source>
        <strain>Y51</strain>
    </source>
</reference>
<sequence>MASVVLIGTQWGDEGKGKVTDFLAEKADLVVRYQGGNNAGHTVVAKGEEFKLHLIPSGILYEDKTCVIGNGVVVDPKVLLEELAYLSERKVKTGKLLISSNAHVIMPYHRLLDALEEDSRGEHKIGTTKRGIGPAYMDKTLRIGIRIMDLIDDEEFAAKLRRNLQEKNNLLTKVYGVEPLDYDAIYQEYSGYAQKIRGLVADSSLVIDESLKAGEKVLFEGAQGTLLDLDHGTYPYVTSSHPIAGGACTGAGVGPTRINRVVGVIKAYTTRVGEGPFPTELADETGELMRQNGHEFGTTTGRARRCGWFDAMIARYAVRVSGISDFALMKLDVLSGFEKIKICVGYRVNNEVIYEFPQSQKIFKACEPVYEVIEGWQEDITGVTHFEDLPKAAQDYVRRIEQLTETQVTLIAVGPGREQTIVRGEIF</sequence>
<accession>Q24MC6</accession>
<dbReference type="EC" id="6.3.4.4" evidence="1"/>
<dbReference type="EMBL" id="AP008230">
    <property type="protein sequence ID" value="BAE86816.1"/>
    <property type="molecule type" value="Genomic_DNA"/>
</dbReference>
<dbReference type="RefSeq" id="WP_011462314.1">
    <property type="nucleotide sequence ID" value="NC_007907.1"/>
</dbReference>
<dbReference type="SMR" id="Q24MC6"/>
<dbReference type="STRING" id="138119.DSY5027"/>
<dbReference type="KEGG" id="dsy:DSY5027"/>
<dbReference type="eggNOG" id="COG0104">
    <property type="taxonomic scope" value="Bacteria"/>
</dbReference>
<dbReference type="HOGENOM" id="CLU_029848_0_0_9"/>
<dbReference type="UniPathway" id="UPA00075">
    <property type="reaction ID" value="UER00335"/>
</dbReference>
<dbReference type="Proteomes" id="UP000001946">
    <property type="component" value="Chromosome"/>
</dbReference>
<dbReference type="GO" id="GO:0005737">
    <property type="term" value="C:cytoplasm"/>
    <property type="evidence" value="ECO:0007669"/>
    <property type="project" value="UniProtKB-SubCell"/>
</dbReference>
<dbReference type="GO" id="GO:0004019">
    <property type="term" value="F:adenylosuccinate synthase activity"/>
    <property type="evidence" value="ECO:0007669"/>
    <property type="project" value="UniProtKB-UniRule"/>
</dbReference>
<dbReference type="GO" id="GO:0005525">
    <property type="term" value="F:GTP binding"/>
    <property type="evidence" value="ECO:0007669"/>
    <property type="project" value="UniProtKB-UniRule"/>
</dbReference>
<dbReference type="GO" id="GO:0000287">
    <property type="term" value="F:magnesium ion binding"/>
    <property type="evidence" value="ECO:0007669"/>
    <property type="project" value="UniProtKB-UniRule"/>
</dbReference>
<dbReference type="GO" id="GO:0044208">
    <property type="term" value="P:'de novo' AMP biosynthetic process"/>
    <property type="evidence" value="ECO:0007669"/>
    <property type="project" value="UniProtKB-UniRule"/>
</dbReference>
<dbReference type="GO" id="GO:0046040">
    <property type="term" value="P:IMP metabolic process"/>
    <property type="evidence" value="ECO:0007669"/>
    <property type="project" value="TreeGrafter"/>
</dbReference>
<dbReference type="CDD" id="cd03108">
    <property type="entry name" value="AdSS"/>
    <property type="match status" value="1"/>
</dbReference>
<dbReference type="FunFam" id="1.10.300.10:FF:000001">
    <property type="entry name" value="Adenylosuccinate synthetase"/>
    <property type="match status" value="1"/>
</dbReference>
<dbReference type="FunFam" id="3.90.170.10:FF:000001">
    <property type="entry name" value="Adenylosuccinate synthetase"/>
    <property type="match status" value="1"/>
</dbReference>
<dbReference type="Gene3D" id="3.40.440.10">
    <property type="entry name" value="Adenylosuccinate Synthetase, subunit A, domain 1"/>
    <property type="match status" value="1"/>
</dbReference>
<dbReference type="Gene3D" id="1.10.300.10">
    <property type="entry name" value="Adenylosuccinate Synthetase, subunit A, domain 2"/>
    <property type="match status" value="1"/>
</dbReference>
<dbReference type="Gene3D" id="3.90.170.10">
    <property type="entry name" value="Adenylosuccinate Synthetase, subunit A, domain 3"/>
    <property type="match status" value="1"/>
</dbReference>
<dbReference type="HAMAP" id="MF_00011">
    <property type="entry name" value="Adenylosucc_synth"/>
    <property type="match status" value="1"/>
</dbReference>
<dbReference type="InterPro" id="IPR018220">
    <property type="entry name" value="Adenylosuccin_syn_GTP-bd"/>
</dbReference>
<dbReference type="InterPro" id="IPR033128">
    <property type="entry name" value="Adenylosuccin_syn_Lys_AS"/>
</dbReference>
<dbReference type="InterPro" id="IPR042109">
    <property type="entry name" value="Adenylosuccinate_synth_dom1"/>
</dbReference>
<dbReference type="InterPro" id="IPR042110">
    <property type="entry name" value="Adenylosuccinate_synth_dom2"/>
</dbReference>
<dbReference type="InterPro" id="IPR042111">
    <property type="entry name" value="Adenylosuccinate_synth_dom3"/>
</dbReference>
<dbReference type="InterPro" id="IPR001114">
    <property type="entry name" value="Adenylosuccinate_synthetase"/>
</dbReference>
<dbReference type="InterPro" id="IPR027417">
    <property type="entry name" value="P-loop_NTPase"/>
</dbReference>
<dbReference type="NCBIfam" id="NF002223">
    <property type="entry name" value="PRK01117.1"/>
    <property type="match status" value="1"/>
</dbReference>
<dbReference type="NCBIfam" id="TIGR00184">
    <property type="entry name" value="purA"/>
    <property type="match status" value="1"/>
</dbReference>
<dbReference type="PANTHER" id="PTHR11846">
    <property type="entry name" value="ADENYLOSUCCINATE SYNTHETASE"/>
    <property type="match status" value="1"/>
</dbReference>
<dbReference type="PANTHER" id="PTHR11846:SF0">
    <property type="entry name" value="ADENYLOSUCCINATE SYNTHETASE"/>
    <property type="match status" value="1"/>
</dbReference>
<dbReference type="Pfam" id="PF00709">
    <property type="entry name" value="Adenylsucc_synt"/>
    <property type="match status" value="1"/>
</dbReference>
<dbReference type="SMART" id="SM00788">
    <property type="entry name" value="Adenylsucc_synt"/>
    <property type="match status" value="1"/>
</dbReference>
<dbReference type="SUPFAM" id="SSF52540">
    <property type="entry name" value="P-loop containing nucleoside triphosphate hydrolases"/>
    <property type="match status" value="1"/>
</dbReference>
<dbReference type="PROSITE" id="PS01266">
    <property type="entry name" value="ADENYLOSUCCIN_SYN_1"/>
    <property type="match status" value="1"/>
</dbReference>
<dbReference type="PROSITE" id="PS00513">
    <property type="entry name" value="ADENYLOSUCCIN_SYN_2"/>
    <property type="match status" value="1"/>
</dbReference>
<evidence type="ECO:0000255" key="1">
    <source>
        <dbReference type="HAMAP-Rule" id="MF_00011"/>
    </source>
</evidence>
<protein>
    <recommendedName>
        <fullName evidence="1">Adenylosuccinate synthetase</fullName>
        <shortName evidence="1">AMPSase</shortName>
        <shortName evidence="1">AdSS</shortName>
        <ecNumber evidence="1">6.3.4.4</ecNumber>
    </recommendedName>
    <alternativeName>
        <fullName evidence="1">IMP--aspartate ligase</fullName>
    </alternativeName>
</protein>
<gene>
    <name evidence="1" type="primary">purA</name>
    <name type="ordered locus">DSY5027</name>
</gene>
<proteinExistence type="inferred from homology"/>
<organism>
    <name type="scientific">Desulfitobacterium hafniense (strain Y51)</name>
    <dbReference type="NCBI Taxonomy" id="138119"/>
    <lineage>
        <taxon>Bacteria</taxon>
        <taxon>Bacillati</taxon>
        <taxon>Bacillota</taxon>
        <taxon>Clostridia</taxon>
        <taxon>Eubacteriales</taxon>
        <taxon>Desulfitobacteriaceae</taxon>
        <taxon>Desulfitobacterium</taxon>
    </lineage>
</organism>